<feature type="signal peptide" evidence="2">
    <location>
        <begin position="1"/>
        <end position="20"/>
    </location>
</feature>
<feature type="chain" id="PRO_0000448922" description="Laccase ustL">
    <location>
        <begin position="21"/>
        <end position="653"/>
    </location>
</feature>
<feature type="domain" description="Plastocyanin-like 1" evidence="2">
    <location>
        <begin position="31"/>
        <end position="143"/>
    </location>
</feature>
<feature type="domain" description="Plastocyanin-like 2" evidence="2">
    <location>
        <begin position="173"/>
        <end position="362"/>
    </location>
</feature>
<feature type="domain" description="Plastocyanin-like 3" evidence="2">
    <location>
        <begin position="463"/>
        <end position="594"/>
    </location>
</feature>
<feature type="binding site" evidence="1">
    <location>
        <position position="501"/>
    </location>
    <ligand>
        <name>Cu cation</name>
        <dbReference type="ChEBI" id="CHEBI:23378"/>
        <label>4</label>
    </ligand>
</feature>
<feature type="binding site" evidence="1">
    <location>
        <position position="504"/>
    </location>
    <ligand>
        <name>Cu cation</name>
        <dbReference type="ChEBI" id="CHEBI:23378"/>
        <label>1</label>
    </ligand>
</feature>
<feature type="binding site" evidence="1">
    <location>
        <position position="506"/>
    </location>
    <ligand>
        <name>Cu cation</name>
        <dbReference type="ChEBI" id="CHEBI:23378"/>
        <label>3</label>
    </ligand>
</feature>
<feature type="binding site" evidence="1">
    <location>
        <position position="576"/>
    </location>
    <ligand>
        <name>Cu cation</name>
        <dbReference type="ChEBI" id="CHEBI:23378"/>
        <label>3</label>
    </ligand>
</feature>
<feature type="binding site" evidence="1">
    <location>
        <position position="577"/>
    </location>
    <ligand>
        <name>Cu cation</name>
        <dbReference type="ChEBI" id="CHEBI:23378"/>
        <label>4</label>
    </ligand>
</feature>
<feature type="binding site" evidence="1">
    <location>
        <position position="578"/>
    </location>
    <ligand>
        <name>Cu cation</name>
        <dbReference type="ChEBI" id="CHEBI:23378"/>
        <label>2</label>
    </ligand>
</feature>
<feature type="binding site" evidence="1">
    <location>
        <position position="582"/>
    </location>
    <ligand>
        <name>Cu cation</name>
        <dbReference type="ChEBI" id="CHEBI:23378"/>
        <label>4</label>
    </ligand>
</feature>
<feature type="glycosylation site" description="N-linked (GlcNAc...) asparagine" evidence="3">
    <location>
        <position position="74"/>
    </location>
</feature>
<feature type="glycosylation site" description="N-linked (GlcNAc...) asparagine" evidence="3">
    <location>
        <position position="220"/>
    </location>
</feature>
<feature type="glycosylation site" description="N-linked (GlcNAc...) asparagine" evidence="3">
    <location>
        <position position="235"/>
    </location>
</feature>
<feature type="glycosylation site" description="N-linked (GlcNAc...) asparagine" evidence="3">
    <location>
        <position position="255"/>
    </location>
</feature>
<feature type="glycosylation site" description="N-linked (GlcNAc...) asparagine" evidence="3">
    <location>
        <position position="277"/>
    </location>
</feature>
<feature type="glycosylation site" description="N-linked (GlcNAc...) asparagine" evidence="3">
    <location>
        <position position="405"/>
    </location>
</feature>
<feature type="glycosylation site" description="N-linked (GlcNAc...) asparagine" evidence="3">
    <location>
        <position position="463"/>
    </location>
</feature>
<feature type="glycosylation site" description="N-linked (GlcNAc...) asparagine" evidence="3">
    <location>
        <position position="479"/>
    </location>
</feature>
<feature type="glycosylation site" description="N-linked (GlcNAc...) asparagine" evidence="3">
    <location>
        <position position="623"/>
    </location>
</feature>
<keyword id="KW-0186">Copper</keyword>
<keyword id="KW-0325">Glycoprotein</keyword>
<keyword id="KW-0479">Metal-binding</keyword>
<keyword id="KW-0560">Oxidoreductase</keyword>
<keyword id="KW-0677">Repeat</keyword>
<keyword id="KW-0732">Signal</keyword>
<organism>
    <name type="scientific">Ustilaginoidea virens</name>
    <name type="common">Rice false smut fungus</name>
    <name type="synonym">Villosiclava virens</name>
    <dbReference type="NCBI Taxonomy" id="1159556"/>
    <lineage>
        <taxon>Eukaryota</taxon>
        <taxon>Fungi</taxon>
        <taxon>Dikarya</taxon>
        <taxon>Ascomycota</taxon>
        <taxon>Pezizomycotina</taxon>
        <taxon>Sordariomycetes</taxon>
        <taxon>Hypocreomycetidae</taxon>
        <taxon>Hypocreales</taxon>
        <taxon>Clavicipitaceae</taxon>
        <taxon>Ustilaginoidea</taxon>
    </lineage>
</organism>
<name>USTL_USTVR</name>
<evidence type="ECO:0000250" key="1">
    <source>
        <dbReference type="UniProtKB" id="Q70KY3"/>
    </source>
</evidence>
<evidence type="ECO:0000255" key="2"/>
<evidence type="ECO:0000255" key="3">
    <source>
        <dbReference type="PROSITE-ProRule" id="PRU00498"/>
    </source>
</evidence>
<evidence type="ECO:0000269" key="4">
    <source>
    </source>
</evidence>
<evidence type="ECO:0000303" key="5">
    <source>
    </source>
</evidence>
<evidence type="ECO:0000305" key="6"/>
<evidence type="ECO:0000305" key="7">
    <source>
    </source>
</evidence>
<dbReference type="EC" id="1.10.3.-" evidence="4"/>
<dbReference type="EMBL" id="MK210203">
    <property type="protein sequence ID" value="QDF21479.1"/>
    <property type="molecule type" value="mRNA"/>
</dbReference>
<dbReference type="EMBL" id="BBTG02000019">
    <property type="protein sequence ID" value="GAO19027.1"/>
    <property type="status" value="ALT_SEQ"/>
    <property type="molecule type" value="Genomic_DNA"/>
</dbReference>
<dbReference type="SMR" id="A0A4Y6F0M8"/>
<dbReference type="STRING" id="1159556.A0A4Y6F0M8"/>
<dbReference type="GlyCosmos" id="A0A4Y6F0M8">
    <property type="glycosylation" value="9 sites, No reported glycans"/>
</dbReference>
<dbReference type="HOGENOM" id="CLU_006504_5_0_1"/>
<dbReference type="Proteomes" id="UP000054053">
    <property type="component" value="Unassembled WGS sequence"/>
</dbReference>
<dbReference type="GO" id="GO:0005507">
    <property type="term" value="F:copper ion binding"/>
    <property type="evidence" value="ECO:0007669"/>
    <property type="project" value="InterPro"/>
</dbReference>
<dbReference type="GO" id="GO:0016491">
    <property type="term" value="F:oxidoreductase activity"/>
    <property type="evidence" value="ECO:0007669"/>
    <property type="project" value="UniProtKB-KW"/>
</dbReference>
<dbReference type="CDD" id="cd13850">
    <property type="entry name" value="CuRO_1_Abr2_like"/>
    <property type="match status" value="1"/>
</dbReference>
<dbReference type="CDD" id="cd13876">
    <property type="entry name" value="CuRO_2_Abr2_like"/>
    <property type="match status" value="1"/>
</dbReference>
<dbReference type="CDD" id="cd13898">
    <property type="entry name" value="CuRO_3_Abr2_like"/>
    <property type="match status" value="1"/>
</dbReference>
<dbReference type="FunFam" id="2.60.40.420:FF:000036">
    <property type="entry name" value="L-ascorbate oxidase"/>
    <property type="match status" value="1"/>
</dbReference>
<dbReference type="Gene3D" id="2.60.40.420">
    <property type="entry name" value="Cupredoxins - blue copper proteins"/>
    <property type="match status" value="3"/>
</dbReference>
<dbReference type="InterPro" id="IPR011707">
    <property type="entry name" value="Cu-oxidase-like_N"/>
</dbReference>
<dbReference type="InterPro" id="IPR001117">
    <property type="entry name" value="Cu-oxidase_2nd"/>
</dbReference>
<dbReference type="InterPro" id="IPR011706">
    <property type="entry name" value="Cu-oxidase_C"/>
</dbReference>
<dbReference type="InterPro" id="IPR045087">
    <property type="entry name" value="Cu-oxidase_fam"/>
</dbReference>
<dbReference type="InterPro" id="IPR033138">
    <property type="entry name" value="Cu_oxidase_CS"/>
</dbReference>
<dbReference type="InterPro" id="IPR002355">
    <property type="entry name" value="Cu_oxidase_Cu_BS"/>
</dbReference>
<dbReference type="InterPro" id="IPR008972">
    <property type="entry name" value="Cupredoxin"/>
</dbReference>
<dbReference type="PANTHER" id="PTHR11709:SF488">
    <property type="entry name" value="LACCASE-RELATED"/>
    <property type="match status" value="1"/>
</dbReference>
<dbReference type="PANTHER" id="PTHR11709">
    <property type="entry name" value="MULTI-COPPER OXIDASE"/>
    <property type="match status" value="1"/>
</dbReference>
<dbReference type="Pfam" id="PF00394">
    <property type="entry name" value="Cu-oxidase"/>
    <property type="match status" value="1"/>
</dbReference>
<dbReference type="Pfam" id="PF07731">
    <property type="entry name" value="Cu-oxidase_2"/>
    <property type="match status" value="1"/>
</dbReference>
<dbReference type="Pfam" id="PF07732">
    <property type="entry name" value="Cu-oxidase_3"/>
    <property type="match status" value="1"/>
</dbReference>
<dbReference type="SUPFAM" id="SSF49503">
    <property type="entry name" value="Cupredoxins"/>
    <property type="match status" value="3"/>
</dbReference>
<dbReference type="PROSITE" id="PS00079">
    <property type="entry name" value="MULTICOPPER_OXIDASE1"/>
    <property type="match status" value="1"/>
</dbReference>
<dbReference type="PROSITE" id="PS00080">
    <property type="entry name" value="MULTICOPPER_OXIDASE2"/>
    <property type="match status" value="1"/>
</dbReference>
<proteinExistence type="evidence at protein level"/>
<accession>A0A4Y6F0M8</accession>
<accession>A0A063C933</accession>
<accession>A0A1B5L626</accession>
<comment type="function">
    <text evidence="4 7">Laccase; part of the gene cluster that mediates the biosynthesis of ustilaginoidins, dimeric gamma-naphthopyrones isolated from different fungal species (PubMed:31050129). The first step in the biosynthesis of ustilaginoidins is the production of gamma-naphthopyrone precursor YWA1 by the non-reducing polyketide synthase ustP, via condensation of one acetyl-CoA starter unit with 6 malonyl-CoA units (PubMed:31050129). YWA1 is then probably substrate of the ustZ to yield norrubrofusarin via a dehydration reaction (Probable). A key enzyme in the biosynthetic pathway is the laccase ustL, which catalyzes the oxidative dimerization of norrubrofusarin to ustilaginoidin A (PubMed:31050129). It can produce the M- and P-atropisomers in varying amounts, depending on the reaction conditions (PubMed:31050129). For the biosynthesis of 3-methylustilaginoid in derivatives such as chaetochromin A, a methylated derivative of YWA1 is required (Probable). The C-methylation is considered to be catalyzed by ustM, the phosphopantetheine attachment site of which indicates that it acts on the growing polyketide chain before release of the product (Probable). For the biosynthesis of chaetochromin A, it is assumed that saturation of the D2 double bond takes place before dimerization, and is probably catalyzed by an external reductase because no candidate gene was identified within the cluster (Probable).</text>
</comment>
<comment type="catalytic activity">
    <reaction evidence="4">
        <text>4 norrubrofusarin + O2 = 2 ustilaginoidin A + 2 H2O</text>
        <dbReference type="Rhea" id="RHEA:62688"/>
        <dbReference type="ChEBI" id="CHEBI:15377"/>
        <dbReference type="ChEBI" id="CHEBI:15379"/>
        <dbReference type="ChEBI" id="CHEBI:145839"/>
        <dbReference type="ChEBI" id="CHEBI:145840"/>
    </reaction>
    <physiologicalReaction direction="left-to-right" evidence="4">
        <dbReference type="Rhea" id="RHEA:62689"/>
    </physiologicalReaction>
</comment>
<comment type="pathway">
    <text evidence="4">Secondary metabolite biosynthesis.</text>
</comment>
<comment type="similarity">
    <text evidence="6">Belongs to the multicopper oxidase family.</text>
</comment>
<comment type="sequence caution" evidence="6">
    <conflict type="erroneous gene model prediction">
        <sequence resource="EMBL-CDS" id="GAO19027"/>
    </conflict>
</comment>
<gene>
    <name evidence="5" type="primary">ustL</name>
    <name type="ORF">UVI_02036220</name>
</gene>
<protein>
    <recommendedName>
        <fullName evidence="5">Laccase ustL</fullName>
        <ecNumber evidence="4">1.10.3.-</ecNumber>
    </recommendedName>
    <alternativeName>
        <fullName evidence="5">Ustilaginoidins biosynthesis cluster protein L</fullName>
    </alternativeName>
</protein>
<sequence>MTSLTGLALLLCVLASQSWAARVQKTLRIAWEKGAPNGQSREMIFTNGVFPGPELIFDEDDDVEITVHNDMNRNTTVHWHGIAQEGTPWADGVIGLSQQPIRPGESFVYRFKASPPGTHWYHSHERMTLVDGLHGAFFIRPKRDMKDLWSKISNDPKDIDAMSKAALDPKLMVLSDWSRFTSEEYWKAIEDSKLLLFCVDSILLNGHGEVYCPPQEFLVNQTQWGPQHFTFPDQNVTDKGCFPAVEEGIQGPWVNQSLPEKIPAHIQSGCVPSAGSNYTVEVDPADGWVSMNFIAAASNKQVDFSIDEHPMWIYEVDGNYVQPHKFVAAAITAGERFSVMVKLDKQPGRYTIRLPDSGATQVISGFANMVYKGAEHVSPPTKPYVTYGGLSGRPETDTESYAPYNISADYMPPWPANPPAATADEEYLLVMGRAGSSFQYTMNTNYLYPMDFKADRPLLHYPNQTVGTEDEKLVIRTKNGSWVDLILQVAVLPGDGAAFEHMMHKHGSKTWRIGNGAGVWKYKSVAEAIAAEPESFNLKDPGLRDSWLTMFSPVPAGGYWSVFRYQVTNPGPWLFHCHFELHAMGGMSIALLDGVDVWPQVPEEYAVRHHPSQGTQTLAATPNASKPWYNGMLNFMQAVLGILPGQGSEELRR</sequence>
<reference key="1">
    <citation type="journal article" date="2019" name="Angew. Chem. Int. Ed.">
        <title>Enantioselective phenol coupling by laccases in the biosynthesis of fungal dimeric naphthopyrones.</title>
        <authorList>
            <person name="Obermaier S."/>
            <person name="Thiele W."/>
            <person name="Fuertges L."/>
            <person name="Mueller M."/>
        </authorList>
    </citation>
    <scope>NUCLEOTIDE SEQUENCE [MRNA]</scope>
    <scope>FUNCTION</scope>
    <scope>CATALYTIC ACTIVITY</scope>
    <scope>PATHWAY</scope>
    <source>
        <strain>IPU010</strain>
    </source>
</reference>
<reference key="2">
    <citation type="journal article" date="2016" name="Genome Announc.">
        <title>Genome sequence of Ustilaginoidea virens IPU010, a rice pathogenic fungus causing false smut.</title>
        <authorList>
            <person name="Kumagai T."/>
            <person name="Ishii T."/>
            <person name="Terai G."/>
            <person name="Umemura M."/>
            <person name="Machida M."/>
            <person name="Asai K."/>
        </authorList>
    </citation>
    <scope>NUCLEOTIDE SEQUENCE [LARGE SCALE GENOMIC DNA]</scope>
    <source>
        <strain>IPU010</strain>
    </source>
</reference>